<evidence type="ECO:0000269" key="1">
    <source>
    </source>
</evidence>
<evidence type="ECO:0000305" key="2"/>
<organism>
    <name type="scientific">Panagrellus redivivus</name>
    <name type="common">Microworm</name>
    <dbReference type="NCBI Taxonomy" id="6233"/>
    <lineage>
        <taxon>Eukaryota</taxon>
        <taxon>Metazoa</taxon>
        <taxon>Ecdysozoa</taxon>
        <taxon>Nematoda</taxon>
        <taxon>Chromadorea</taxon>
        <taxon>Rhabditida</taxon>
        <taxon>Tylenchina</taxon>
        <taxon>Panagrolaimomorpha</taxon>
        <taxon>Panagrolaimoidea</taxon>
        <taxon>Panagrolaimidae</taxon>
        <taxon>Panagrellus</taxon>
    </lineage>
</organism>
<sequence length="7" mass="992">KHEYLRF</sequence>
<reference key="1">
    <citation type="journal article" date="1994" name="Parasitology">
        <title>The FMRFamide-like neuropeptide AF2 (Ascaris suum) is present in the free-living nematode, Panagrellus redivivus (Nematoda, Rhabditida).</title>
        <authorList>
            <person name="Maule A.G."/>
            <person name="Shaw C."/>
            <person name="Bowman J.W."/>
        </authorList>
    </citation>
    <scope>PROTEIN SEQUENCE</scope>
    <scope>AMIDATION AT PHE-7</scope>
</reference>
<protein>
    <recommendedName>
        <fullName>FMRFamide-like neuropeptide AF2</fullName>
    </recommendedName>
</protein>
<feature type="peptide" id="PRO_0000043657" description="FMRFamide-like neuropeptide AF2">
    <location>
        <begin position="1"/>
        <end position="7"/>
    </location>
</feature>
<feature type="modified residue" description="Phenylalanine amide" evidence="1">
    <location>
        <position position="7"/>
    </location>
</feature>
<name>FAF2_PANRE</name>
<comment type="function">
    <text>Has effects on muscle tension.</text>
</comment>
<comment type="subcellular location">
    <subcellularLocation>
        <location>Secreted</location>
    </subcellularLocation>
</comment>
<comment type="tissue specificity">
    <text>Found in the nerve cords and a variety of ganglia particularly in the anterior regions.</text>
</comment>
<comment type="similarity">
    <text evidence="2">Belongs to the FARP (FMRFamide related peptide) family.</text>
</comment>
<keyword id="KW-0027">Amidation</keyword>
<keyword id="KW-0903">Direct protein sequencing</keyword>
<keyword id="KW-0527">Neuropeptide</keyword>
<keyword id="KW-1185">Reference proteome</keyword>
<keyword id="KW-0964">Secreted</keyword>
<dbReference type="Proteomes" id="UP000492821">
    <property type="component" value="Unplaced"/>
</dbReference>
<dbReference type="GO" id="GO:0005576">
    <property type="term" value="C:extracellular region"/>
    <property type="evidence" value="ECO:0007669"/>
    <property type="project" value="UniProtKB-SubCell"/>
</dbReference>
<dbReference type="GO" id="GO:0007218">
    <property type="term" value="P:neuropeptide signaling pathway"/>
    <property type="evidence" value="ECO:0007669"/>
    <property type="project" value="UniProtKB-KW"/>
</dbReference>
<proteinExistence type="evidence at protein level"/>
<accession>P67880</accession>
<accession>P31890</accession>